<name>RL1_AMOA5</name>
<reference key="1">
    <citation type="journal article" date="2010" name="J. Bacteriol.">
        <title>The genome of the amoeba symbiont 'Candidatus Amoebophilus asiaticus' reveals common mechanisms for host cell interaction among amoeba-associated bacteria.</title>
        <authorList>
            <person name="Schmitz-Esser S."/>
            <person name="Tischler P."/>
            <person name="Arnold R."/>
            <person name="Montanaro J."/>
            <person name="Wagner M."/>
            <person name="Rattei T."/>
            <person name="Horn M."/>
        </authorList>
    </citation>
    <scope>NUCLEOTIDE SEQUENCE [LARGE SCALE GENOMIC DNA]</scope>
    <source>
        <strain>5a2</strain>
    </source>
</reference>
<keyword id="KW-1185">Reference proteome</keyword>
<keyword id="KW-0678">Repressor</keyword>
<keyword id="KW-0687">Ribonucleoprotein</keyword>
<keyword id="KW-0689">Ribosomal protein</keyword>
<keyword id="KW-0694">RNA-binding</keyword>
<keyword id="KW-0699">rRNA-binding</keyword>
<keyword id="KW-0810">Translation regulation</keyword>
<keyword id="KW-0820">tRNA-binding</keyword>
<protein>
    <recommendedName>
        <fullName evidence="1">Large ribosomal subunit protein uL1</fullName>
    </recommendedName>
    <alternativeName>
        <fullName evidence="2">50S ribosomal protein L1</fullName>
    </alternativeName>
</protein>
<evidence type="ECO:0000255" key="1">
    <source>
        <dbReference type="HAMAP-Rule" id="MF_01318"/>
    </source>
</evidence>
<evidence type="ECO:0000305" key="2"/>
<dbReference type="EMBL" id="CP001102">
    <property type="protein sequence ID" value="ACE06695.1"/>
    <property type="molecule type" value="Genomic_DNA"/>
</dbReference>
<dbReference type="RefSeq" id="WP_012473437.1">
    <property type="nucleotide sequence ID" value="NC_010830.1"/>
</dbReference>
<dbReference type="SMR" id="B3ETZ3"/>
<dbReference type="STRING" id="452471.Aasi_1399"/>
<dbReference type="KEGG" id="aas:Aasi_1399"/>
<dbReference type="eggNOG" id="COG0081">
    <property type="taxonomic scope" value="Bacteria"/>
</dbReference>
<dbReference type="HOGENOM" id="CLU_062853_0_0_10"/>
<dbReference type="OrthoDB" id="9803740at2"/>
<dbReference type="Proteomes" id="UP000001227">
    <property type="component" value="Chromosome"/>
</dbReference>
<dbReference type="GO" id="GO:0015934">
    <property type="term" value="C:large ribosomal subunit"/>
    <property type="evidence" value="ECO:0007669"/>
    <property type="project" value="InterPro"/>
</dbReference>
<dbReference type="GO" id="GO:0019843">
    <property type="term" value="F:rRNA binding"/>
    <property type="evidence" value="ECO:0007669"/>
    <property type="project" value="UniProtKB-UniRule"/>
</dbReference>
<dbReference type="GO" id="GO:0003735">
    <property type="term" value="F:structural constituent of ribosome"/>
    <property type="evidence" value="ECO:0007669"/>
    <property type="project" value="InterPro"/>
</dbReference>
<dbReference type="GO" id="GO:0000049">
    <property type="term" value="F:tRNA binding"/>
    <property type="evidence" value="ECO:0007669"/>
    <property type="project" value="UniProtKB-KW"/>
</dbReference>
<dbReference type="GO" id="GO:0006417">
    <property type="term" value="P:regulation of translation"/>
    <property type="evidence" value="ECO:0007669"/>
    <property type="project" value="UniProtKB-KW"/>
</dbReference>
<dbReference type="GO" id="GO:0006412">
    <property type="term" value="P:translation"/>
    <property type="evidence" value="ECO:0007669"/>
    <property type="project" value="UniProtKB-UniRule"/>
</dbReference>
<dbReference type="CDD" id="cd00403">
    <property type="entry name" value="Ribosomal_L1"/>
    <property type="match status" value="1"/>
</dbReference>
<dbReference type="FunFam" id="3.40.50.790:FF:000001">
    <property type="entry name" value="50S ribosomal protein L1"/>
    <property type="match status" value="1"/>
</dbReference>
<dbReference type="Gene3D" id="3.30.190.20">
    <property type="match status" value="1"/>
</dbReference>
<dbReference type="Gene3D" id="3.40.50.790">
    <property type="match status" value="1"/>
</dbReference>
<dbReference type="HAMAP" id="MF_01318_B">
    <property type="entry name" value="Ribosomal_uL1_B"/>
    <property type="match status" value="1"/>
</dbReference>
<dbReference type="InterPro" id="IPR005878">
    <property type="entry name" value="Ribosom_uL1_bac-type"/>
</dbReference>
<dbReference type="InterPro" id="IPR002143">
    <property type="entry name" value="Ribosomal_uL1"/>
</dbReference>
<dbReference type="InterPro" id="IPR023674">
    <property type="entry name" value="Ribosomal_uL1-like"/>
</dbReference>
<dbReference type="InterPro" id="IPR028364">
    <property type="entry name" value="Ribosomal_uL1/biogenesis"/>
</dbReference>
<dbReference type="InterPro" id="IPR016095">
    <property type="entry name" value="Ribosomal_uL1_3-a/b-sand"/>
</dbReference>
<dbReference type="InterPro" id="IPR023673">
    <property type="entry name" value="Ribosomal_uL1_CS"/>
</dbReference>
<dbReference type="NCBIfam" id="TIGR01169">
    <property type="entry name" value="rplA_bact"/>
    <property type="match status" value="1"/>
</dbReference>
<dbReference type="PANTHER" id="PTHR36427">
    <property type="entry name" value="54S RIBOSOMAL PROTEIN L1, MITOCHONDRIAL"/>
    <property type="match status" value="1"/>
</dbReference>
<dbReference type="PANTHER" id="PTHR36427:SF3">
    <property type="entry name" value="LARGE RIBOSOMAL SUBUNIT PROTEIN UL1M"/>
    <property type="match status" value="1"/>
</dbReference>
<dbReference type="Pfam" id="PF00687">
    <property type="entry name" value="Ribosomal_L1"/>
    <property type="match status" value="1"/>
</dbReference>
<dbReference type="PIRSF" id="PIRSF002155">
    <property type="entry name" value="Ribosomal_L1"/>
    <property type="match status" value="1"/>
</dbReference>
<dbReference type="SUPFAM" id="SSF56808">
    <property type="entry name" value="Ribosomal protein L1"/>
    <property type="match status" value="1"/>
</dbReference>
<dbReference type="PROSITE" id="PS01199">
    <property type="entry name" value="RIBOSOMAL_L1"/>
    <property type="match status" value="1"/>
</dbReference>
<comment type="function">
    <text evidence="1">Binds directly to 23S rRNA. The L1 stalk is quite mobile in the ribosome, and is involved in E site tRNA release.</text>
</comment>
<comment type="function">
    <text evidence="1">Protein L1 is also a translational repressor protein, it controls the translation of the L11 operon by binding to its mRNA.</text>
</comment>
<comment type="subunit">
    <text evidence="1">Part of the 50S ribosomal subunit.</text>
</comment>
<comment type="similarity">
    <text evidence="1">Belongs to the universal ribosomal protein uL1 family.</text>
</comment>
<accession>B3ETZ3</accession>
<sequence>MAKLTRKQKAVAEQCDFQKSYKLEEAIELVQKITYTKFDASIDIAVHLGVDPRKADQMVRGTVVLPHGTGKNKRILVLCTPEKEKEAREAGADHVGLDDYIKKIEEGWVDIDVIITMPEIMAKVGRLGKILGPRGLMPNPKTGTVTVEIAKAVQAVKSGKIEYKVDKYGIVHASVGRVSFSKEALRDNAKELLATLLKAKPASAKGSYLKSISLASTMSKGVDVDTSTNFGF</sequence>
<proteinExistence type="inferred from homology"/>
<gene>
    <name evidence="1" type="primary">rplA</name>
    <name type="ordered locus">Aasi_1399</name>
</gene>
<organism>
    <name type="scientific">Amoebophilus asiaticus (strain 5a2)</name>
    <dbReference type="NCBI Taxonomy" id="452471"/>
    <lineage>
        <taxon>Bacteria</taxon>
        <taxon>Pseudomonadati</taxon>
        <taxon>Bacteroidota</taxon>
        <taxon>Cytophagia</taxon>
        <taxon>Cytophagales</taxon>
        <taxon>Amoebophilaceae</taxon>
        <taxon>Candidatus Amoebophilus</taxon>
    </lineage>
</organism>
<feature type="chain" id="PRO_1000141353" description="Large ribosomal subunit protein uL1">
    <location>
        <begin position="1"/>
        <end position="232"/>
    </location>
</feature>